<accession>A3ANB5</accession>
<accession>B9F6B5</accession>
<accession>Q0DN07</accession>
<accession>Q10CH7</accession>
<accession>Q9AY60</accession>
<keyword id="KW-0156">Chromatin regulator</keyword>
<keyword id="KW-0963">Cytoplasm</keyword>
<keyword id="KW-0217">Developmental protein</keyword>
<keyword id="KW-0539">Nucleus</keyword>
<keyword id="KW-1185">Reference proteome</keyword>
<sequence>MEAVVVDAGSKLLKAGIALPDQSPSLVMPSKMKLEVEDGQMGDGAVVEEVVQPVVRGFVKDWDAMEDLLNYVLYSNIGWEIGDEGQILFTEPLFTPKALREQLAQLMFEKFNVSGFYDSEQAVLSLYAVGRISGCTVDIGHGKIDIAPVCEGAVQHIASKRFDIGGTDLTNLFAEELKKSNSSVNIDISDVERLKEQYACCAEDQMAFEAIGSSCRPERHTLPDGQVITIEKERYIVGEALFQPHILGLEDYGIVHQLVTSVSNVTPEYHRQLLENTMLCGGTASMTGFEDRFQREANLSASAICPSLVKPPEYMPENLARYSAWLGGAILAKVVFPQNQHVTKGDYDETGPSIVHKKCF</sequence>
<dbReference type="EMBL" id="AC084320">
    <property type="protein sequence ID" value="AAK09223.1"/>
    <property type="status" value="ALT_SEQ"/>
    <property type="molecule type" value="Genomic_DNA"/>
</dbReference>
<dbReference type="EMBL" id="DP000009">
    <property type="protein sequence ID" value="ABF99200.1"/>
    <property type="status" value="ALT_SEQ"/>
    <property type="molecule type" value="Genomic_DNA"/>
</dbReference>
<dbReference type="EMBL" id="AP008209">
    <property type="protein sequence ID" value="BAF13381.1"/>
    <property type="status" value="ALT_SEQ"/>
    <property type="molecule type" value="Genomic_DNA"/>
</dbReference>
<dbReference type="EMBL" id="AP014959">
    <property type="protein sequence ID" value="BAS86698.1"/>
    <property type="molecule type" value="Genomic_DNA"/>
</dbReference>
<dbReference type="EMBL" id="CM000140">
    <property type="protein sequence ID" value="EEE60046.1"/>
    <property type="molecule type" value="Genomic_DNA"/>
</dbReference>
<dbReference type="EMBL" id="AK069426">
    <property type="status" value="NOT_ANNOTATED_CDS"/>
    <property type="molecule type" value="mRNA"/>
</dbReference>
<dbReference type="RefSeq" id="XP_015632359.1">
    <property type="nucleotide sequence ID" value="XM_015776873.1"/>
</dbReference>
<dbReference type="RefSeq" id="XP_015632360.1">
    <property type="nucleotide sequence ID" value="XM_015776874.1"/>
</dbReference>
<dbReference type="SMR" id="A3ANB5"/>
<dbReference type="FunCoup" id="A3ANB5">
    <property type="interactions" value="1485"/>
</dbReference>
<dbReference type="STRING" id="39947.A3ANB5"/>
<dbReference type="PaxDb" id="39947-A3ANB5"/>
<dbReference type="EnsemblPlants" id="Os03t0783000-01">
    <property type="protein sequence ID" value="Os03t0783000-01"/>
    <property type="gene ID" value="Os03g0783000"/>
</dbReference>
<dbReference type="Gramene" id="Os03t0783000-01">
    <property type="protein sequence ID" value="Os03t0783000-01"/>
    <property type="gene ID" value="Os03g0783000"/>
</dbReference>
<dbReference type="eggNOG" id="KOG0676">
    <property type="taxonomic scope" value="Eukaryota"/>
</dbReference>
<dbReference type="HOGENOM" id="CLU_027965_0_3_1"/>
<dbReference type="InParanoid" id="A3ANB5"/>
<dbReference type="OMA" id="YMPENML"/>
<dbReference type="OrthoDB" id="74201at2759"/>
<dbReference type="Proteomes" id="UP000000763">
    <property type="component" value="Chromosome 3"/>
</dbReference>
<dbReference type="Proteomes" id="UP000007752">
    <property type="component" value="Chromosome 3"/>
</dbReference>
<dbReference type="Proteomes" id="UP000059680">
    <property type="component" value="Chromosome 3"/>
</dbReference>
<dbReference type="GO" id="GO:0015629">
    <property type="term" value="C:actin cytoskeleton"/>
    <property type="evidence" value="ECO:0000318"/>
    <property type="project" value="GO_Central"/>
</dbReference>
<dbReference type="GO" id="GO:0005737">
    <property type="term" value="C:cytoplasm"/>
    <property type="evidence" value="ECO:0007669"/>
    <property type="project" value="UniProtKB-SubCell"/>
</dbReference>
<dbReference type="GO" id="GO:0005634">
    <property type="term" value="C:nucleus"/>
    <property type="evidence" value="ECO:0000318"/>
    <property type="project" value="GO_Central"/>
</dbReference>
<dbReference type="GO" id="GO:0009653">
    <property type="term" value="P:anatomical structure morphogenesis"/>
    <property type="evidence" value="ECO:0000318"/>
    <property type="project" value="GO_Central"/>
</dbReference>
<dbReference type="GO" id="GO:0006325">
    <property type="term" value="P:chromatin organization"/>
    <property type="evidence" value="ECO:0007669"/>
    <property type="project" value="UniProtKB-KW"/>
</dbReference>
<dbReference type="CDD" id="cd10209">
    <property type="entry name" value="ASKHA_NBD_AtARP7-like"/>
    <property type="match status" value="1"/>
</dbReference>
<dbReference type="FunFam" id="3.30.420.40:FF:000150">
    <property type="entry name" value="Actin-related protein 7"/>
    <property type="match status" value="1"/>
</dbReference>
<dbReference type="FunFam" id="3.90.640.10:FF:000026">
    <property type="entry name" value="Actin-related protein 7"/>
    <property type="match status" value="1"/>
</dbReference>
<dbReference type="Gene3D" id="3.30.420.40">
    <property type="match status" value="2"/>
</dbReference>
<dbReference type="Gene3D" id="3.90.640.10">
    <property type="entry name" value="Actin, Chain A, domain 4"/>
    <property type="match status" value="1"/>
</dbReference>
<dbReference type="InterPro" id="IPR004000">
    <property type="entry name" value="Actin"/>
</dbReference>
<dbReference type="InterPro" id="IPR043129">
    <property type="entry name" value="ATPase_NBD"/>
</dbReference>
<dbReference type="PANTHER" id="PTHR11937">
    <property type="entry name" value="ACTIN"/>
    <property type="match status" value="1"/>
</dbReference>
<dbReference type="Pfam" id="PF00022">
    <property type="entry name" value="Actin"/>
    <property type="match status" value="2"/>
</dbReference>
<dbReference type="PRINTS" id="PR00190">
    <property type="entry name" value="ACTIN"/>
</dbReference>
<dbReference type="SMART" id="SM00268">
    <property type="entry name" value="ACTIN"/>
    <property type="match status" value="1"/>
</dbReference>
<dbReference type="SUPFAM" id="SSF53067">
    <property type="entry name" value="Actin-like ATPase domain"/>
    <property type="match status" value="2"/>
</dbReference>
<gene>
    <name type="primary">ARP7</name>
    <name type="ordered locus">Os03g0783000</name>
    <name type="ordered locus">LOC_Os03g56970</name>
    <name type="ORF">OsJ_012287</name>
    <name evidence="4" type="ORF">OsJ_12834</name>
    <name type="ORF">OSJNBa0091J19.6</name>
</gene>
<evidence type="ECO:0000250" key="1"/>
<evidence type="ECO:0000250" key="2">
    <source>
        <dbReference type="UniProtKB" id="Q8L4Y5"/>
    </source>
</evidence>
<evidence type="ECO:0000305" key="3"/>
<evidence type="ECO:0000312" key="4">
    <source>
        <dbReference type="EMBL" id="EEE60046.1"/>
    </source>
</evidence>
<reference key="1">
    <citation type="journal article" date="2005" name="Genome Res.">
        <title>Sequence, annotation, and analysis of synteny between rice chromosome 3 and diverged grass species.</title>
        <authorList>
            <consortium name="The rice chromosome 3 sequencing consortium"/>
            <person name="Buell C.R."/>
            <person name="Yuan Q."/>
            <person name="Ouyang S."/>
            <person name="Liu J."/>
            <person name="Zhu W."/>
            <person name="Wang A."/>
            <person name="Maiti R."/>
            <person name="Haas B."/>
            <person name="Wortman J."/>
            <person name="Pertea M."/>
            <person name="Jones K.M."/>
            <person name="Kim M."/>
            <person name="Overton L."/>
            <person name="Tsitrin T."/>
            <person name="Fadrosh D."/>
            <person name="Bera J."/>
            <person name="Weaver B."/>
            <person name="Jin S."/>
            <person name="Johri S."/>
            <person name="Reardon M."/>
            <person name="Webb K."/>
            <person name="Hill J."/>
            <person name="Moffat K."/>
            <person name="Tallon L."/>
            <person name="Van Aken S."/>
            <person name="Lewis M."/>
            <person name="Utterback T."/>
            <person name="Feldblyum T."/>
            <person name="Zismann V."/>
            <person name="Iobst S."/>
            <person name="Hsiao J."/>
            <person name="de Vazeille A.R."/>
            <person name="Salzberg S.L."/>
            <person name="White O."/>
            <person name="Fraser C.M."/>
            <person name="Yu Y."/>
            <person name="Kim H."/>
            <person name="Rambo T."/>
            <person name="Currie J."/>
            <person name="Collura K."/>
            <person name="Kernodle-Thompson S."/>
            <person name="Wei F."/>
            <person name="Kudrna K."/>
            <person name="Ammiraju J.S.S."/>
            <person name="Luo M."/>
            <person name="Goicoechea J.L."/>
            <person name="Wing R.A."/>
            <person name="Henry D."/>
            <person name="Oates R."/>
            <person name="Palmer M."/>
            <person name="Pries G."/>
            <person name="Saski C."/>
            <person name="Simmons J."/>
            <person name="Soderlund C."/>
            <person name="Nelson W."/>
            <person name="de la Bastide M."/>
            <person name="Spiegel L."/>
            <person name="Nascimento L."/>
            <person name="Huang E."/>
            <person name="Preston R."/>
            <person name="Zutavern T."/>
            <person name="Palmer L."/>
            <person name="O'Shaughnessy A."/>
            <person name="Dike S."/>
            <person name="McCombie W.R."/>
            <person name="Minx P."/>
            <person name="Cordum H."/>
            <person name="Wilson R."/>
            <person name="Jin W."/>
            <person name="Lee H.R."/>
            <person name="Jiang J."/>
            <person name="Jackson S."/>
        </authorList>
    </citation>
    <scope>NUCLEOTIDE SEQUENCE [LARGE SCALE GENOMIC DNA]</scope>
    <source>
        <strain>cv. Nipponbare</strain>
    </source>
</reference>
<reference key="2">
    <citation type="journal article" date="2005" name="Nature">
        <title>The map-based sequence of the rice genome.</title>
        <authorList>
            <consortium name="International rice genome sequencing project (IRGSP)"/>
        </authorList>
    </citation>
    <scope>NUCLEOTIDE SEQUENCE [LARGE SCALE GENOMIC DNA]</scope>
    <source>
        <strain>cv. Nipponbare</strain>
    </source>
</reference>
<reference key="3">
    <citation type="journal article" date="2008" name="Nucleic Acids Res.">
        <title>The rice annotation project database (RAP-DB): 2008 update.</title>
        <authorList>
            <consortium name="The rice annotation project (RAP)"/>
        </authorList>
    </citation>
    <scope>GENOME REANNOTATION</scope>
    <source>
        <strain>cv. Nipponbare</strain>
    </source>
</reference>
<reference key="4">
    <citation type="journal article" date="2013" name="Rice">
        <title>Improvement of the Oryza sativa Nipponbare reference genome using next generation sequence and optical map data.</title>
        <authorList>
            <person name="Kawahara Y."/>
            <person name="de la Bastide M."/>
            <person name="Hamilton J.P."/>
            <person name="Kanamori H."/>
            <person name="McCombie W.R."/>
            <person name="Ouyang S."/>
            <person name="Schwartz D.C."/>
            <person name="Tanaka T."/>
            <person name="Wu J."/>
            <person name="Zhou S."/>
            <person name="Childs K.L."/>
            <person name="Davidson R.M."/>
            <person name="Lin H."/>
            <person name="Quesada-Ocampo L."/>
            <person name="Vaillancourt B."/>
            <person name="Sakai H."/>
            <person name="Lee S.S."/>
            <person name="Kim J."/>
            <person name="Numa H."/>
            <person name="Itoh T."/>
            <person name="Buell C.R."/>
            <person name="Matsumoto T."/>
        </authorList>
    </citation>
    <scope>GENOME REANNOTATION</scope>
    <source>
        <strain>cv. Nipponbare</strain>
    </source>
</reference>
<reference key="5">
    <citation type="journal article" date="2005" name="PLoS Biol.">
        <title>The genomes of Oryza sativa: a history of duplications.</title>
        <authorList>
            <person name="Yu J."/>
            <person name="Wang J."/>
            <person name="Lin W."/>
            <person name="Li S."/>
            <person name="Li H."/>
            <person name="Zhou J."/>
            <person name="Ni P."/>
            <person name="Dong W."/>
            <person name="Hu S."/>
            <person name="Zeng C."/>
            <person name="Zhang J."/>
            <person name="Zhang Y."/>
            <person name="Li R."/>
            <person name="Xu Z."/>
            <person name="Li S."/>
            <person name="Li X."/>
            <person name="Zheng H."/>
            <person name="Cong L."/>
            <person name="Lin L."/>
            <person name="Yin J."/>
            <person name="Geng J."/>
            <person name="Li G."/>
            <person name="Shi J."/>
            <person name="Liu J."/>
            <person name="Lv H."/>
            <person name="Li J."/>
            <person name="Wang J."/>
            <person name="Deng Y."/>
            <person name="Ran L."/>
            <person name="Shi X."/>
            <person name="Wang X."/>
            <person name="Wu Q."/>
            <person name="Li C."/>
            <person name="Ren X."/>
            <person name="Wang J."/>
            <person name="Wang X."/>
            <person name="Li D."/>
            <person name="Liu D."/>
            <person name="Zhang X."/>
            <person name="Ji Z."/>
            <person name="Zhao W."/>
            <person name="Sun Y."/>
            <person name="Zhang Z."/>
            <person name="Bao J."/>
            <person name="Han Y."/>
            <person name="Dong L."/>
            <person name="Ji J."/>
            <person name="Chen P."/>
            <person name="Wu S."/>
            <person name="Liu J."/>
            <person name="Xiao Y."/>
            <person name="Bu D."/>
            <person name="Tan J."/>
            <person name="Yang L."/>
            <person name="Ye C."/>
            <person name="Zhang J."/>
            <person name="Xu J."/>
            <person name="Zhou Y."/>
            <person name="Yu Y."/>
            <person name="Zhang B."/>
            <person name="Zhuang S."/>
            <person name="Wei H."/>
            <person name="Liu B."/>
            <person name="Lei M."/>
            <person name="Yu H."/>
            <person name="Li Y."/>
            <person name="Xu H."/>
            <person name="Wei S."/>
            <person name="He X."/>
            <person name="Fang L."/>
            <person name="Zhang Z."/>
            <person name="Zhang Y."/>
            <person name="Huang X."/>
            <person name="Su Z."/>
            <person name="Tong W."/>
            <person name="Li J."/>
            <person name="Tong Z."/>
            <person name="Li S."/>
            <person name="Ye J."/>
            <person name="Wang L."/>
            <person name="Fang L."/>
            <person name="Lei T."/>
            <person name="Chen C.-S."/>
            <person name="Chen H.-C."/>
            <person name="Xu Z."/>
            <person name="Li H."/>
            <person name="Huang H."/>
            <person name="Zhang F."/>
            <person name="Xu H."/>
            <person name="Li N."/>
            <person name="Zhao C."/>
            <person name="Li S."/>
            <person name="Dong L."/>
            <person name="Huang Y."/>
            <person name="Li L."/>
            <person name="Xi Y."/>
            <person name="Qi Q."/>
            <person name="Li W."/>
            <person name="Zhang B."/>
            <person name="Hu W."/>
            <person name="Zhang Y."/>
            <person name="Tian X."/>
            <person name="Jiao Y."/>
            <person name="Liang X."/>
            <person name="Jin J."/>
            <person name="Gao L."/>
            <person name="Zheng W."/>
            <person name="Hao B."/>
            <person name="Liu S.-M."/>
            <person name="Wang W."/>
            <person name="Yuan L."/>
            <person name="Cao M."/>
            <person name="McDermott J."/>
            <person name="Samudrala R."/>
            <person name="Wang J."/>
            <person name="Wong G.K.-S."/>
            <person name="Yang H."/>
        </authorList>
    </citation>
    <scope>NUCLEOTIDE SEQUENCE [LARGE SCALE GENOMIC DNA]</scope>
    <source>
        <strain>cv. Nipponbare</strain>
    </source>
</reference>
<reference key="6">
    <citation type="journal article" date="2003" name="Science">
        <title>Collection, mapping, and annotation of over 28,000 cDNA clones from japonica rice.</title>
        <authorList>
            <consortium name="The rice full-length cDNA consortium"/>
        </authorList>
    </citation>
    <scope>NUCLEOTIDE SEQUENCE [LARGE SCALE MRNA]</scope>
    <source>
        <strain>cv. Nipponbare</strain>
    </source>
</reference>
<reference key="7">
    <citation type="journal article" date="2004" name="Trends Plant Sci.">
        <title>Plant actin-related proteins.</title>
        <authorList>
            <person name="Kandasamy M.K."/>
            <person name="Deal R.B."/>
            <person name="McKinney E.C."/>
            <person name="Meagher R.B."/>
        </authorList>
    </citation>
    <scope>REVIEW</scope>
    <scope>GENE FAMILY</scope>
    <scope>NOMENCLATURE</scope>
</reference>
<comment type="function">
    <text evidence="1">Essential protein required during embryogenesis and all plant development stages, probably through a chromatin-mediated regulation of gene expression.</text>
</comment>
<comment type="subcellular location">
    <subcellularLocation>
        <location evidence="2">Nucleus</location>
    </subcellularLocation>
    <subcellularLocation>
        <location evidence="2">Cytoplasm</location>
    </subcellularLocation>
</comment>
<comment type="similarity">
    <text evidence="3">Belongs to the actin family. Plant ARP7 subfamily.</text>
</comment>
<comment type="sequence caution" evidence="3">
    <conflict type="erroneous gene model prediction">
        <sequence resource="EMBL-CDS" id="AAK09223"/>
    </conflict>
</comment>
<comment type="sequence caution" evidence="3">
    <conflict type="frameshift">
        <sequence resource="EMBL-CDS" id="AAK09223"/>
    </conflict>
</comment>
<comment type="sequence caution" evidence="3">
    <conflict type="erroneous gene model prediction">
        <sequence resource="EMBL-CDS" id="ABF99200"/>
    </conflict>
</comment>
<comment type="sequence caution" evidence="3">
    <conflict type="frameshift">
        <sequence resource="EMBL-CDS" id="ABF99200"/>
    </conflict>
</comment>
<comment type="sequence caution" evidence="3">
    <conflict type="erroneous gene model prediction">
        <sequence resource="EMBL-CDS" id="BAF13381"/>
    </conflict>
</comment>
<comment type="sequence caution" evidence="3">
    <conflict type="frameshift">
        <sequence resource="EMBL-CDS" id="BAF13381"/>
    </conflict>
</comment>
<organism>
    <name type="scientific">Oryza sativa subsp. japonica</name>
    <name type="common">Rice</name>
    <dbReference type="NCBI Taxonomy" id="39947"/>
    <lineage>
        <taxon>Eukaryota</taxon>
        <taxon>Viridiplantae</taxon>
        <taxon>Streptophyta</taxon>
        <taxon>Embryophyta</taxon>
        <taxon>Tracheophyta</taxon>
        <taxon>Spermatophyta</taxon>
        <taxon>Magnoliopsida</taxon>
        <taxon>Liliopsida</taxon>
        <taxon>Poales</taxon>
        <taxon>Poaceae</taxon>
        <taxon>BOP clade</taxon>
        <taxon>Oryzoideae</taxon>
        <taxon>Oryzeae</taxon>
        <taxon>Oryzinae</taxon>
        <taxon>Oryza</taxon>
        <taxon>Oryza sativa</taxon>
    </lineage>
</organism>
<protein>
    <recommendedName>
        <fullName>Actin-related protein 7</fullName>
    </recommendedName>
</protein>
<proteinExistence type="evidence at transcript level"/>
<name>ARP7_ORYSJ</name>
<feature type="chain" id="PRO_0000320543" description="Actin-related protein 7">
    <location>
        <begin position="1"/>
        <end position="360"/>
    </location>
</feature>
<feature type="sequence conflict" description="In Ref. 6; AK069426." evidence="3" ref="6">
    <original>C</original>
    <variation>Y</variation>
    <location>
        <position position="305"/>
    </location>
</feature>